<protein>
    <recommendedName>
        <fullName>Serine/threonine-protein phosphatase 2A regulatory subunit B'' subunit gamma</fullName>
    </recommendedName>
</protein>
<evidence type="ECO:0000250" key="1">
    <source>
        <dbReference type="UniProtKB" id="Q969Q6"/>
    </source>
</evidence>
<evidence type="ECO:0000250" key="2">
    <source>
        <dbReference type="UniProtKB" id="Q9JK24"/>
    </source>
</evidence>
<evidence type="ECO:0000255" key="3">
    <source>
        <dbReference type="PROSITE-ProRule" id="PRU10142"/>
    </source>
</evidence>
<evidence type="ECO:0000256" key="4">
    <source>
        <dbReference type="SAM" id="MobiDB-lite"/>
    </source>
</evidence>
<name>P2R3C_RAT</name>
<reference key="1">
    <citation type="journal article" date="2004" name="Genome Res.">
        <title>The status, quality, and expansion of the NIH full-length cDNA project: the Mammalian Gene Collection (MGC).</title>
        <authorList>
            <consortium name="The MGC Project Team"/>
        </authorList>
    </citation>
    <scope>NUCLEOTIDE SEQUENCE [LARGE SCALE MRNA]</scope>
    <source>
        <tissue>Testis</tissue>
    </source>
</reference>
<proteinExistence type="evidence at transcript level"/>
<feature type="chain" id="PRO_0000277835" description="Serine/threonine-protein phosphatase 2A regulatory subunit B'' subunit gamma">
    <location>
        <begin position="1"/>
        <end position="453"/>
    </location>
</feature>
<feature type="domain" description="EF-hand 1">
    <location>
        <begin position="273"/>
        <end position="308"/>
    </location>
</feature>
<feature type="domain" description="EF-hand 2">
    <location>
        <begin position="341"/>
        <end position="376"/>
    </location>
</feature>
<feature type="region of interest" description="Disordered" evidence="4">
    <location>
        <begin position="1"/>
        <end position="27"/>
    </location>
</feature>
<feature type="binding site" evidence="3">
    <location>
        <position position="286"/>
    </location>
    <ligand>
        <name>Ca(2+)</name>
        <dbReference type="ChEBI" id="CHEBI:29108"/>
    </ligand>
</feature>
<feature type="binding site" evidence="3">
    <location>
        <position position="288"/>
    </location>
    <ligand>
        <name>Ca(2+)</name>
        <dbReference type="ChEBI" id="CHEBI:29108"/>
    </ligand>
</feature>
<feature type="binding site" evidence="3">
    <location>
        <position position="290"/>
    </location>
    <ligand>
        <name>Ca(2+)</name>
        <dbReference type="ChEBI" id="CHEBI:29108"/>
    </ligand>
</feature>
<feature type="binding site" evidence="3">
    <location>
        <position position="292"/>
    </location>
    <ligand>
        <name>Ca(2+)</name>
        <dbReference type="ChEBI" id="CHEBI:29108"/>
    </ligand>
</feature>
<feature type="binding site" evidence="3">
    <location>
        <position position="297"/>
    </location>
    <ligand>
        <name>Ca(2+)</name>
        <dbReference type="ChEBI" id="CHEBI:29108"/>
    </ligand>
</feature>
<gene>
    <name type="primary">Ppp2r3c</name>
</gene>
<comment type="function">
    <text evidence="1 2">May regulate MCM3AP phosphorylation through phosphatase recruitment. May act as a negative regulator of ABCB1 expression and function through the dephosphorylation of ABCB1 by TFPI2/PPP2R3C complex. May play a role in the activation-induced cell death of B-cells.</text>
</comment>
<comment type="subunit">
    <text evidence="1 2">Interacts with MCM3AP/GANP, PPP5C, and the phosphatase 2A core enzyme composed of the PPP2CA catalytic subunit and the constant regulatory subunit PPP2R1A. Finds in a complex with ABCB1, TFPI2 and PPP2R3C; leading to the dephosphorylation of ABCB1.</text>
</comment>
<comment type="subcellular location">
    <subcellularLocation>
        <location evidence="2">Nucleus</location>
    </subcellularLocation>
    <subcellularLocation>
        <location evidence="2">Cytoplasm</location>
    </subcellularLocation>
    <text evidence="2">Excluded from the nucleoli. Localization is cell cycle-dependent. Localizes to the cytoplasm during cytokinesis.</text>
</comment>
<sequence length="453" mass="53379">MDWKDVLRRRLASPNSDPKRKKSEQELKDEEMDLFTKYYSEWKGGRKNTNEFYKTIPRFYYRLPAEDEVLLQKLREESRAVFLQRKSRELLDNEELQNLWFLLDKHQIPPMIGEEAMINYENFLKVGEKAGPKCKQFFTAKVFAKLLHTDSYGRVSIMQFFNYVMRKVWLHQTRIGLSLYDVAGQGYLRESDLENYILELIPTLPQLDGLEKSFYSFYVCTAVRKFFFFLDPLRTGKIKIQDILACSFLDDLLELRDEELSKESQETNWFSAPSALRVYGQYLNLDKDHNGMLSKEELSRYGTATMTNVFLDRVFQECLTYDGEMDYKTYLDFVLALENRKEPAALQYIFKLLDIENKGYLNVFSLNYFFRAIQELMKIHGQDPVSFQDVKDEIFDMVKPKDPLKISLQDLINSNQGDTVTTILIDLNGFWTYENREALVANDNENSADLDDT</sequence>
<keyword id="KW-0106">Calcium</keyword>
<keyword id="KW-0963">Cytoplasm</keyword>
<keyword id="KW-0479">Metal-binding</keyword>
<keyword id="KW-0539">Nucleus</keyword>
<keyword id="KW-1185">Reference proteome</keyword>
<keyword id="KW-0677">Repeat</keyword>
<accession>Q6AXZ3</accession>
<organism>
    <name type="scientific">Rattus norvegicus</name>
    <name type="common">Rat</name>
    <dbReference type="NCBI Taxonomy" id="10116"/>
    <lineage>
        <taxon>Eukaryota</taxon>
        <taxon>Metazoa</taxon>
        <taxon>Chordata</taxon>
        <taxon>Craniata</taxon>
        <taxon>Vertebrata</taxon>
        <taxon>Euteleostomi</taxon>
        <taxon>Mammalia</taxon>
        <taxon>Eutheria</taxon>
        <taxon>Euarchontoglires</taxon>
        <taxon>Glires</taxon>
        <taxon>Rodentia</taxon>
        <taxon>Myomorpha</taxon>
        <taxon>Muroidea</taxon>
        <taxon>Muridae</taxon>
        <taxon>Murinae</taxon>
        <taxon>Rattus</taxon>
    </lineage>
</organism>
<dbReference type="EMBL" id="BC079257">
    <property type="protein sequence ID" value="AAH79257.1"/>
    <property type="molecule type" value="mRNA"/>
</dbReference>
<dbReference type="RefSeq" id="NP_001014218.1">
    <property type="nucleotide sequence ID" value="NM_001014196.1"/>
</dbReference>
<dbReference type="RefSeq" id="XP_017449714.1">
    <property type="nucleotide sequence ID" value="XM_017594225.1"/>
</dbReference>
<dbReference type="SMR" id="Q6AXZ3"/>
<dbReference type="FunCoup" id="Q6AXZ3">
    <property type="interactions" value="3385"/>
</dbReference>
<dbReference type="STRING" id="10116.ENSRNOP00000068983"/>
<dbReference type="PhosphoSitePlus" id="Q6AXZ3"/>
<dbReference type="PaxDb" id="10116-ENSRNOP00000031839"/>
<dbReference type="Ensembl" id="ENSRNOT00000082198.2">
    <property type="protein sequence ID" value="ENSRNOP00000068983.1"/>
    <property type="gene ID" value="ENSRNOG00000023591.6"/>
</dbReference>
<dbReference type="GeneID" id="362739"/>
<dbReference type="KEGG" id="rno:362739"/>
<dbReference type="UCSC" id="RGD:1309207">
    <property type="organism name" value="rat"/>
</dbReference>
<dbReference type="AGR" id="RGD:1309207"/>
<dbReference type="CTD" id="55012"/>
<dbReference type="RGD" id="1309207">
    <property type="gene designation" value="Ppp2r3c"/>
</dbReference>
<dbReference type="eggNOG" id="KOG2562">
    <property type="taxonomic scope" value="Eukaryota"/>
</dbReference>
<dbReference type="GeneTree" id="ENSGT00940000155583"/>
<dbReference type="InParanoid" id="Q6AXZ3"/>
<dbReference type="OrthoDB" id="10265007at2759"/>
<dbReference type="PhylomeDB" id="Q6AXZ3"/>
<dbReference type="TreeFam" id="TF318412"/>
<dbReference type="PRO" id="PR:Q6AXZ3"/>
<dbReference type="Proteomes" id="UP000002494">
    <property type="component" value="Chromosome 6"/>
</dbReference>
<dbReference type="Bgee" id="ENSRNOG00000023591">
    <property type="expression patterns" value="Expressed in testis and 19 other cell types or tissues"/>
</dbReference>
<dbReference type="GO" id="GO:0005813">
    <property type="term" value="C:centrosome"/>
    <property type="evidence" value="ECO:0000266"/>
    <property type="project" value="RGD"/>
</dbReference>
<dbReference type="GO" id="GO:0005737">
    <property type="term" value="C:cytoplasm"/>
    <property type="evidence" value="ECO:0007669"/>
    <property type="project" value="UniProtKB-SubCell"/>
</dbReference>
<dbReference type="GO" id="GO:0005634">
    <property type="term" value="C:nucleus"/>
    <property type="evidence" value="ECO:0007669"/>
    <property type="project" value="UniProtKB-SubCell"/>
</dbReference>
<dbReference type="GO" id="GO:0046872">
    <property type="term" value="F:metal ion binding"/>
    <property type="evidence" value="ECO:0007669"/>
    <property type="project" value="UniProtKB-KW"/>
</dbReference>
<dbReference type="GO" id="GO:0001782">
    <property type="term" value="P:B cell homeostasis"/>
    <property type="evidence" value="ECO:0000266"/>
    <property type="project" value="RGD"/>
</dbReference>
<dbReference type="GO" id="GO:0030865">
    <property type="term" value="P:cortical cytoskeleton organization"/>
    <property type="evidence" value="ECO:0000318"/>
    <property type="project" value="GO_Central"/>
</dbReference>
<dbReference type="GO" id="GO:0000226">
    <property type="term" value="P:microtubule cytoskeleton organization"/>
    <property type="evidence" value="ECO:0000318"/>
    <property type="project" value="GO_Central"/>
</dbReference>
<dbReference type="GO" id="GO:0045579">
    <property type="term" value="P:positive regulation of B cell differentiation"/>
    <property type="evidence" value="ECO:0000266"/>
    <property type="project" value="RGD"/>
</dbReference>
<dbReference type="GO" id="GO:0002759">
    <property type="term" value="P:regulation of antimicrobial humoral response"/>
    <property type="evidence" value="ECO:0000266"/>
    <property type="project" value="RGD"/>
</dbReference>
<dbReference type="GO" id="GO:0050864">
    <property type="term" value="P:regulation of B cell activation"/>
    <property type="evidence" value="ECO:0000266"/>
    <property type="project" value="RGD"/>
</dbReference>
<dbReference type="GO" id="GO:0035303">
    <property type="term" value="P:regulation of dephosphorylation"/>
    <property type="evidence" value="ECO:0007669"/>
    <property type="project" value="InterPro"/>
</dbReference>
<dbReference type="GO" id="GO:0051900">
    <property type="term" value="P:regulation of mitochondrial depolarization"/>
    <property type="evidence" value="ECO:0000266"/>
    <property type="project" value="RGD"/>
</dbReference>
<dbReference type="GO" id="GO:0048536">
    <property type="term" value="P:spleen development"/>
    <property type="evidence" value="ECO:0000266"/>
    <property type="project" value="RGD"/>
</dbReference>
<dbReference type="GO" id="GO:0043029">
    <property type="term" value="P:T cell homeostasis"/>
    <property type="evidence" value="ECO:0000266"/>
    <property type="project" value="RGD"/>
</dbReference>
<dbReference type="CDD" id="cd21505">
    <property type="entry name" value="PPP2R3C"/>
    <property type="match status" value="1"/>
</dbReference>
<dbReference type="FunFam" id="1.10.238.10:FF:000091">
    <property type="entry name" value="Serine/threonine-protein phosphatase 2A regulatory subunit B'' subunit gamma"/>
    <property type="match status" value="1"/>
</dbReference>
<dbReference type="FunFam" id="1.10.238.220:FF:000002">
    <property type="entry name" value="Serine/threonine-protein phosphatase 2A regulatory subunit B'' subunit gamma"/>
    <property type="match status" value="1"/>
</dbReference>
<dbReference type="Gene3D" id="1.10.238.220">
    <property type="match status" value="1"/>
</dbReference>
<dbReference type="Gene3D" id="1.10.238.10">
    <property type="entry name" value="EF-hand"/>
    <property type="match status" value="1"/>
</dbReference>
<dbReference type="InterPro" id="IPR011992">
    <property type="entry name" value="EF-hand-dom_pair"/>
</dbReference>
<dbReference type="InterPro" id="IPR041534">
    <property type="entry name" value="EF-hand_13"/>
</dbReference>
<dbReference type="InterPro" id="IPR018247">
    <property type="entry name" value="EF_Hand_1_Ca_BS"/>
</dbReference>
<dbReference type="InterPro" id="IPR039865">
    <property type="entry name" value="PPP2R3C"/>
</dbReference>
<dbReference type="PANTHER" id="PTHR12085">
    <property type="entry name" value="SERINE/THREONINE-PROTEIN PHOSPHATASE 2A REGULATORY SUBUNIT B'' SUBUNIT GAMMA"/>
    <property type="match status" value="1"/>
</dbReference>
<dbReference type="PANTHER" id="PTHR12085:SF3">
    <property type="entry name" value="SERINE_THREONINE-PROTEIN PHOSPHATASE 2A REGULATORY SUBUNIT B'' SUBUNIT GAMMA"/>
    <property type="match status" value="1"/>
</dbReference>
<dbReference type="Pfam" id="PF17958">
    <property type="entry name" value="EF-hand_13"/>
    <property type="match status" value="1"/>
</dbReference>
<dbReference type="SUPFAM" id="SSF47473">
    <property type="entry name" value="EF-hand"/>
    <property type="match status" value="2"/>
</dbReference>
<dbReference type="PROSITE" id="PS00018">
    <property type="entry name" value="EF_HAND_1"/>
    <property type="match status" value="1"/>
</dbReference>